<accession>Q81SW0</accession>
<accession>Q6I139</accession>
<accession>Q6KUZ3</accession>
<protein>
    <recommendedName>
        <fullName evidence="1">Demethylmenaquinone methyltransferase</fullName>
        <ecNumber evidence="1">2.1.1.163</ecNumber>
    </recommendedName>
</protein>
<feature type="chain" id="PRO_0000193237" description="Demethylmenaquinone methyltransferase">
    <location>
        <begin position="1"/>
        <end position="237"/>
    </location>
</feature>
<feature type="binding site" evidence="1">
    <location>
        <position position="58"/>
    </location>
    <ligand>
        <name>S-adenosyl-L-methionine</name>
        <dbReference type="ChEBI" id="CHEBI:59789"/>
    </ligand>
</feature>
<feature type="binding site" evidence="1">
    <location>
        <position position="79"/>
    </location>
    <ligand>
        <name>S-adenosyl-L-methionine</name>
        <dbReference type="ChEBI" id="CHEBI:59789"/>
    </ligand>
</feature>
<feature type="binding site" evidence="1">
    <location>
        <begin position="106"/>
        <end position="107"/>
    </location>
    <ligand>
        <name>S-adenosyl-L-methionine</name>
        <dbReference type="ChEBI" id="CHEBI:59789"/>
    </ligand>
</feature>
<dbReference type="EC" id="2.1.1.163" evidence="1"/>
<dbReference type="EMBL" id="AE016879">
    <property type="protein sequence ID" value="AAP25471.1"/>
    <property type="molecule type" value="Genomic_DNA"/>
</dbReference>
<dbReference type="EMBL" id="AE017334">
    <property type="protein sequence ID" value="AAT30632.1"/>
    <property type="molecule type" value="Genomic_DNA"/>
</dbReference>
<dbReference type="EMBL" id="AE017225">
    <property type="protein sequence ID" value="AAT53743.1"/>
    <property type="molecule type" value="Genomic_DNA"/>
</dbReference>
<dbReference type="RefSeq" id="NP_843985.1">
    <property type="nucleotide sequence ID" value="NC_003997.3"/>
</dbReference>
<dbReference type="RefSeq" id="WP_001187667.1">
    <property type="nucleotide sequence ID" value="NZ_WXXJ01000001.1"/>
</dbReference>
<dbReference type="RefSeq" id="YP_027692.1">
    <property type="nucleotide sequence ID" value="NC_005945.1"/>
</dbReference>
<dbReference type="SMR" id="Q81SW0"/>
<dbReference type="IntAct" id="Q81SW0">
    <property type="interactions" value="1"/>
</dbReference>
<dbReference type="STRING" id="261594.GBAA_1534"/>
<dbReference type="DNASU" id="1086556"/>
<dbReference type="GeneID" id="75084824"/>
<dbReference type="KEGG" id="ban:BA_1534"/>
<dbReference type="KEGG" id="bar:GBAA_1534"/>
<dbReference type="KEGG" id="bat:BAS1423"/>
<dbReference type="PATRIC" id="fig|198094.11.peg.1506"/>
<dbReference type="eggNOG" id="COG2226">
    <property type="taxonomic scope" value="Bacteria"/>
</dbReference>
<dbReference type="HOGENOM" id="CLU_037990_0_0_9"/>
<dbReference type="OMA" id="MNDVMSM"/>
<dbReference type="OrthoDB" id="9808140at2"/>
<dbReference type="UniPathway" id="UPA00079">
    <property type="reaction ID" value="UER00169"/>
</dbReference>
<dbReference type="Proteomes" id="UP000000427">
    <property type="component" value="Chromosome"/>
</dbReference>
<dbReference type="Proteomes" id="UP000000594">
    <property type="component" value="Chromosome"/>
</dbReference>
<dbReference type="GO" id="GO:0043770">
    <property type="term" value="F:demethylmenaquinone methyltransferase activity"/>
    <property type="evidence" value="ECO:0007669"/>
    <property type="project" value="UniProtKB-UniRule"/>
</dbReference>
<dbReference type="GO" id="GO:0009234">
    <property type="term" value="P:menaquinone biosynthetic process"/>
    <property type="evidence" value="ECO:0007669"/>
    <property type="project" value="UniProtKB-UniRule"/>
</dbReference>
<dbReference type="GO" id="GO:0032259">
    <property type="term" value="P:methylation"/>
    <property type="evidence" value="ECO:0007669"/>
    <property type="project" value="UniProtKB-KW"/>
</dbReference>
<dbReference type="CDD" id="cd02440">
    <property type="entry name" value="AdoMet_MTases"/>
    <property type="match status" value="1"/>
</dbReference>
<dbReference type="FunFam" id="3.40.50.150:FF:000086">
    <property type="entry name" value="Demethylmenaquinone methyltransferase"/>
    <property type="match status" value="1"/>
</dbReference>
<dbReference type="Gene3D" id="3.40.50.150">
    <property type="entry name" value="Vaccinia Virus protein VP39"/>
    <property type="match status" value="1"/>
</dbReference>
<dbReference type="HAMAP" id="MF_01813">
    <property type="entry name" value="MenG_UbiE_methyltr"/>
    <property type="match status" value="1"/>
</dbReference>
<dbReference type="InterPro" id="IPR014122">
    <property type="entry name" value="MenG_heptapren"/>
</dbReference>
<dbReference type="InterPro" id="IPR029063">
    <property type="entry name" value="SAM-dependent_MTases_sf"/>
</dbReference>
<dbReference type="InterPro" id="IPR004033">
    <property type="entry name" value="UbiE/COQ5_MeTrFase"/>
</dbReference>
<dbReference type="InterPro" id="IPR023576">
    <property type="entry name" value="UbiE/COQ5_MeTrFase_CS"/>
</dbReference>
<dbReference type="NCBIfam" id="TIGR02752">
    <property type="entry name" value="MenG_heptapren"/>
    <property type="match status" value="1"/>
</dbReference>
<dbReference type="NCBIfam" id="TIGR01934">
    <property type="entry name" value="MenG_MenH_UbiE"/>
    <property type="match status" value="1"/>
</dbReference>
<dbReference type="NCBIfam" id="NF001243">
    <property type="entry name" value="PRK00216.1-4"/>
    <property type="match status" value="1"/>
</dbReference>
<dbReference type="NCBIfam" id="NF001244">
    <property type="entry name" value="PRK00216.1-5"/>
    <property type="match status" value="1"/>
</dbReference>
<dbReference type="PANTHER" id="PTHR43591:SF24">
    <property type="entry name" value="2-METHOXY-6-POLYPRENYL-1,4-BENZOQUINOL METHYLASE, MITOCHONDRIAL"/>
    <property type="match status" value="1"/>
</dbReference>
<dbReference type="PANTHER" id="PTHR43591">
    <property type="entry name" value="METHYLTRANSFERASE"/>
    <property type="match status" value="1"/>
</dbReference>
<dbReference type="Pfam" id="PF01209">
    <property type="entry name" value="Ubie_methyltran"/>
    <property type="match status" value="1"/>
</dbReference>
<dbReference type="SUPFAM" id="SSF53335">
    <property type="entry name" value="S-adenosyl-L-methionine-dependent methyltransferases"/>
    <property type="match status" value="1"/>
</dbReference>
<dbReference type="PROSITE" id="PS51608">
    <property type="entry name" value="SAM_MT_UBIE"/>
    <property type="match status" value="1"/>
</dbReference>
<dbReference type="PROSITE" id="PS01183">
    <property type="entry name" value="UBIE_1"/>
    <property type="match status" value="1"/>
</dbReference>
<dbReference type="PROSITE" id="PS01184">
    <property type="entry name" value="UBIE_2"/>
    <property type="match status" value="1"/>
</dbReference>
<keyword id="KW-0474">Menaquinone biosynthesis</keyword>
<keyword id="KW-0489">Methyltransferase</keyword>
<keyword id="KW-1185">Reference proteome</keyword>
<keyword id="KW-0949">S-adenosyl-L-methionine</keyword>
<keyword id="KW-0808">Transferase</keyword>
<gene>
    <name evidence="1" type="primary">menG</name>
    <name type="ordered locus">BA_1534</name>
    <name type="ordered locus">GBAA_1534</name>
    <name type="ordered locus">BAS1423</name>
</gene>
<comment type="function">
    <text evidence="1">Methyltransferase required for the conversion of demethylmenaquinol (DMKH2) to menaquinol (MKH2).</text>
</comment>
<comment type="catalytic activity">
    <reaction evidence="1">
        <text>a 2-demethylmenaquinol + S-adenosyl-L-methionine = a menaquinol + S-adenosyl-L-homocysteine + H(+)</text>
        <dbReference type="Rhea" id="RHEA:42640"/>
        <dbReference type="Rhea" id="RHEA-COMP:9539"/>
        <dbReference type="Rhea" id="RHEA-COMP:9563"/>
        <dbReference type="ChEBI" id="CHEBI:15378"/>
        <dbReference type="ChEBI" id="CHEBI:18151"/>
        <dbReference type="ChEBI" id="CHEBI:55437"/>
        <dbReference type="ChEBI" id="CHEBI:57856"/>
        <dbReference type="ChEBI" id="CHEBI:59789"/>
        <dbReference type="EC" id="2.1.1.163"/>
    </reaction>
</comment>
<comment type="pathway">
    <text evidence="1">Quinol/quinone metabolism; menaquinone biosynthesis; menaquinol from 1,4-dihydroxy-2-naphthoate: step 2/2.</text>
</comment>
<comment type="similarity">
    <text evidence="1">Belongs to the class I-like SAM-binding methyltransferase superfamily. MenG/UbiE family.</text>
</comment>
<sequence length="237" mass="26887">MQQSKEERVHDVFEKISDKYDVMNSVISFQRHKAWRKETMRIMDVKPGSKALDVCCGTADWTIALAGAVGEQGKVVGLDFSENMLSVGKQKVEALQLKQVELLHGNAMELPFEDNTFDYVTIGFGLRNVPDYMHVLKEMTRVVKPGGKVICLETSQPTMIGFRQGYILYFKYIMPLFGKLFAKSYKEYSWLQESASTFPGMKELANMFEKAGLERVQVKPFTFGVAAMHLGMKPESK</sequence>
<evidence type="ECO:0000255" key="1">
    <source>
        <dbReference type="HAMAP-Rule" id="MF_01813"/>
    </source>
</evidence>
<name>MENG_BACAN</name>
<proteinExistence type="inferred from homology"/>
<organism>
    <name type="scientific">Bacillus anthracis</name>
    <dbReference type="NCBI Taxonomy" id="1392"/>
    <lineage>
        <taxon>Bacteria</taxon>
        <taxon>Bacillati</taxon>
        <taxon>Bacillota</taxon>
        <taxon>Bacilli</taxon>
        <taxon>Bacillales</taxon>
        <taxon>Bacillaceae</taxon>
        <taxon>Bacillus</taxon>
        <taxon>Bacillus cereus group</taxon>
    </lineage>
</organism>
<reference key="1">
    <citation type="journal article" date="2003" name="Nature">
        <title>The genome sequence of Bacillus anthracis Ames and comparison to closely related bacteria.</title>
        <authorList>
            <person name="Read T.D."/>
            <person name="Peterson S.N."/>
            <person name="Tourasse N.J."/>
            <person name="Baillie L.W."/>
            <person name="Paulsen I.T."/>
            <person name="Nelson K.E."/>
            <person name="Tettelin H."/>
            <person name="Fouts D.E."/>
            <person name="Eisen J.A."/>
            <person name="Gill S.R."/>
            <person name="Holtzapple E.K."/>
            <person name="Okstad O.A."/>
            <person name="Helgason E."/>
            <person name="Rilstone J."/>
            <person name="Wu M."/>
            <person name="Kolonay J.F."/>
            <person name="Beanan M.J."/>
            <person name="Dodson R.J."/>
            <person name="Brinkac L.M."/>
            <person name="Gwinn M.L."/>
            <person name="DeBoy R.T."/>
            <person name="Madpu R."/>
            <person name="Daugherty S.C."/>
            <person name="Durkin A.S."/>
            <person name="Haft D.H."/>
            <person name="Nelson W.C."/>
            <person name="Peterson J.D."/>
            <person name="Pop M."/>
            <person name="Khouri H.M."/>
            <person name="Radune D."/>
            <person name="Benton J.L."/>
            <person name="Mahamoud Y."/>
            <person name="Jiang L."/>
            <person name="Hance I.R."/>
            <person name="Weidman J.F."/>
            <person name="Berry K.J."/>
            <person name="Plaut R.D."/>
            <person name="Wolf A.M."/>
            <person name="Watkins K.L."/>
            <person name="Nierman W.C."/>
            <person name="Hazen A."/>
            <person name="Cline R.T."/>
            <person name="Redmond C."/>
            <person name="Thwaite J.E."/>
            <person name="White O."/>
            <person name="Salzberg S.L."/>
            <person name="Thomason B."/>
            <person name="Friedlander A.M."/>
            <person name="Koehler T.M."/>
            <person name="Hanna P.C."/>
            <person name="Kolstoe A.-B."/>
            <person name="Fraser C.M."/>
        </authorList>
    </citation>
    <scope>NUCLEOTIDE SEQUENCE [LARGE SCALE GENOMIC DNA]</scope>
    <source>
        <strain>Ames / isolate Porton</strain>
    </source>
</reference>
<reference key="2">
    <citation type="journal article" date="2009" name="J. Bacteriol.">
        <title>The complete genome sequence of Bacillus anthracis Ames 'Ancestor'.</title>
        <authorList>
            <person name="Ravel J."/>
            <person name="Jiang L."/>
            <person name="Stanley S.T."/>
            <person name="Wilson M.R."/>
            <person name="Decker R.S."/>
            <person name="Read T.D."/>
            <person name="Worsham P."/>
            <person name="Keim P.S."/>
            <person name="Salzberg S.L."/>
            <person name="Fraser-Liggett C.M."/>
            <person name="Rasko D.A."/>
        </authorList>
    </citation>
    <scope>NUCLEOTIDE SEQUENCE [LARGE SCALE GENOMIC DNA]</scope>
    <source>
        <strain>Ames ancestor</strain>
    </source>
</reference>
<reference key="3">
    <citation type="submission" date="2004-01" db="EMBL/GenBank/DDBJ databases">
        <title>Complete genome sequence of Bacillus anthracis Sterne.</title>
        <authorList>
            <person name="Brettin T.S."/>
            <person name="Bruce D."/>
            <person name="Challacombe J.F."/>
            <person name="Gilna P."/>
            <person name="Han C."/>
            <person name="Hill K."/>
            <person name="Hitchcock P."/>
            <person name="Jackson P."/>
            <person name="Keim P."/>
            <person name="Longmire J."/>
            <person name="Lucas S."/>
            <person name="Okinaka R."/>
            <person name="Richardson P."/>
            <person name="Rubin E."/>
            <person name="Tice H."/>
        </authorList>
    </citation>
    <scope>NUCLEOTIDE SEQUENCE [LARGE SCALE GENOMIC DNA]</scope>
    <source>
        <strain>Sterne</strain>
    </source>
</reference>